<gene>
    <name evidence="1" type="primary">folD</name>
    <name type="ordered locus">ACP_3313</name>
</gene>
<comment type="function">
    <text evidence="1">Catalyzes the oxidation of 5,10-methylenetetrahydrofolate to 5,10-methenyltetrahydrofolate and then the hydrolysis of 5,10-methenyltetrahydrofolate to 10-formyltetrahydrofolate.</text>
</comment>
<comment type="catalytic activity">
    <reaction evidence="1">
        <text>(6R)-5,10-methylene-5,6,7,8-tetrahydrofolate + NADP(+) = (6R)-5,10-methenyltetrahydrofolate + NADPH</text>
        <dbReference type="Rhea" id="RHEA:22812"/>
        <dbReference type="ChEBI" id="CHEBI:15636"/>
        <dbReference type="ChEBI" id="CHEBI:57455"/>
        <dbReference type="ChEBI" id="CHEBI:57783"/>
        <dbReference type="ChEBI" id="CHEBI:58349"/>
        <dbReference type="EC" id="1.5.1.5"/>
    </reaction>
</comment>
<comment type="catalytic activity">
    <reaction evidence="1">
        <text>(6R)-5,10-methenyltetrahydrofolate + H2O = (6R)-10-formyltetrahydrofolate + H(+)</text>
        <dbReference type="Rhea" id="RHEA:23700"/>
        <dbReference type="ChEBI" id="CHEBI:15377"/>
        <dbReference type="ChEBI" id="CHEBI:15378"/>
        <dbReference type="ChEBI" id="CHEBI:57455"/>
        <dbReference type="ChEBI" id="CHEBI:195366"/>
        <dbReference type="EC" id="3.5.4.9"/>
    </reaction>
</comment>
<comment type="pathway">
    <text evidence="1">One-carbon metabolism; tetrahydrofolate interconversion.</text>
</comment>
<comment type="subunit">
    <text evidence="1">Homodimer.</text>
</comment>
<comment type="similarity">
    <text evidence="1">Belongs to the tetrahydrofolate dehydrogenase/cyclohydrolase family.</text>
</comment>
<sequence length="282" mass="30091">MSAIVLDGKAYAKQLEGEMQERVERIRAKTNGEPPILATILVGSDPASATYVRMKGNACRRVGMDSLSVTLPEETTTEELLAKIDELNADERVRGILLQHPVPKQIDERACFDRISIDKDVDGVTTHGFGRMAMDEPAYGSATPAGIMRLLRHYQIPLEGKEAVVVGRSPILGKPMAMMLLAANATVTICHSRTKNLPDVIRRADIIVGALGKPEFIKGDWIRDGAVVVDAGYHPGGVGDIELSAVIGRCAAYTPVPGGVGPMTIATLIAQTVEAAEKAAGI</sequence>
<name>FOLD_ACIC5</name>
<dbReference type="EC" id="1.5.1.5" evidence="1"/>
<dbReference type="EC" id="3.5.4.9" evidence="1"/>
<dbReference type="EMBL" id="CP001472">
    <property type="protein sequence ID" value="ACO31938.1"/>
    <property type="molecule type" value="Genomic_DNA"/>
</dbReference>
<dbReference type="RefSeq" id="WP_015898346.1">
    <property type="nucleotide sequence ID" value="NC_012483.1"/>
</dbReference>
<dbReference type="SMR" id="C1F683"/>
<dbReference type="FunCoup" id="C1F683">
    <property type="interactions" value="489"/>
</dbReference>
<dbReference type="STRING" id="240015.ACP_3313"/>
<dbReference type="KEGG" id="aca:ACP_3313"/>
<dbReference type="eggNOG" id="COG0190">
    <property type="taxonomic scope" value="Bacteria"/>
</dbReference>
<dbReference type="HOGENOM" id="CLU_034045_2_1_0"/>
<dbReference type="InParanoid" id="C1F683"/>
<dbReference type="OrthoDB" id="9803580at2"/>
<dbReference type="UniPathway" id="UPA00193"/>
<dbReference type="Proteomes" id="UP000002207">
    <property type="component" value="Chromosome"/>
</dbReference>
<dbReference type="GO" id="GO:0005829">
    <property type="term" value="C:cytosol"/>
    <property type="evidence" value="ECO:0007669"/>
    <property type="project" value="TreeGrafter"/>
</dbReference>
<dbReference type="GO" id="GO:0004477">
    <property type="term" value="F:methenyltetrahydrofolate cyclohydrolase activity"/>
    <property type="evidence" value="ECO:0007669"/>
    <property type="project" value="UniProtKB-UniRule"/>
</dbReference>
<dbReference type="GO" id="GO:0004488">
    <property type="term" value="F:methylenetetrahydrofolate dehydrogenase (NADP+) activity"/>
    <property type="evidence" value="ECO:0007669"/>
    <property type="project" value="UniProtKB-UniRule"/>
</dbReference>
<dbReference type="GO" id="GO:0000105">
    <property type="term" value="P:L-histidine biosynthetic process"/>
    <property type="evidence" value="ECO:0007669"/>
    <property type="project" value="UniProtKB-KW"/>
</dbReference>
<dbReference type="GO" id="GO:0009086">
    <property type="term" value="P:methionine biosynthetic process"/>
    <property type="evidence" value="ECO:0007669"/>
    <property type="project" value="UniProtKB-KW"/>
</dbReference>
<dbReference type="GO" id="GO:0006164">
    <property type="term" value="P:purine nucleotide biosynthetic process"/>
    <property type="evidence" value="ECO:0007669"/>
    <property type="project" value="UniProtKB-KW"/>
</dbReference>
<dbReference type="GO" id="GO:0035999">
    <property type="term" value="P:tetrahydrofolate interconversion"/>
    <property type="evidence" value="ECO:0007669"/>
    <property type="project" value="UniProtKB-UniRule"/>
</dbReference>
<dbReference type="CDD" id="cd01080">
    <property type="entry name" value="NAD_bind_m-THF_DH_Cyclohyd"/>
    <property type="match status" value="1"/>
</dbReference>
<dbReference type="FunFam" id="3.40.50.720:FF:000094">
    <property type="entry name" value="Bifunctional protein FolD"/>
    <property type="match status" value="1"/>
</dbReference>
<dbReference type="FunFam" id="3.40.50.10860:FF:000005">
    <property type="entry name" value="C-1-tetrahydrofolate synthase, cytoplasmic, putative"/>
    <property type="match status" value="1"/>
</dbReference>
<dbReference type="Gene3D" id="3.40.50.10860">
    <property type="entry name" value="Leucine Dehydrogenase, chain A, domain 1"/>
    <property type="match status" value="1"/>
</dbReference>
<dbReference type="Gene3D" id="3.40.50.720">
    <property type="entry name" value="NAD(P)-binding Rossmann-like Domain"/>
    <property type="match status" value="1"/>
</dbReference>
<dbReference type="HAMAP" id="MF_01576">
    <property type="entry name" value="THF_DHG_CYH"/>
    <property type="match status" value="1"/>
</dbReference>
<dbReference type="InterPro" id="IPR046346">
    <property type="entry name" value="Aminoacid_DH-like_N_sf"/>
</dbReference>
<dbReference type="InterPro" id="IPR036291">
    <property type="entry name" value="NAD(P)-bd_dom_sf"/>
</dbReference>
<dbReference type="InterPro" id="IPR000672">
    <property type="entry name" value="THF_DH/CycHdrlase"/>
</dbReference>
<dbReference type="InterPro" id="IPR020630">
    <property type="entry name" value="THF_DH/CycHdrlase_cat_dom"/>
</dbReference>
<dbReference type="InterPro" id="IPR020867">
    <property type="entry name" value="THF_DH/CycHdrlase_CS"/>
</dbReference>
<dbReference type="InterPro" id="IPR020631">
    <property type="entry name" value="THF_DH/CycHdrlase_NAD-bd_dom"/>
</dbReference>
<dbReference type="NCBIfam" id="NF010788">
    <property type="entry name" value="PRK14192.1"/>
    <property type="match status" value="1"/>
</dbReference>
<dbReference type="PANTHER" id="PTHR48099:SF5">
    <property type="entry name" value="C-1-TETRAHYDROFOLATE SYNTHASE, CYTOPLASMIC"/>
    <property type="match status" value="1"/>
</dbReference>
<dbReference type="PANTHER" id="PTHR48099">
    <property type="entry name" value="C-1-TETRAHYDROFOLATE SYNTHASE, CYTOPLASMIC-RELATED"/>
    <property type="match status" value="1"/>
</dbReference>
<dbReference type="Pfam" id="PF00763">
    <property type="entry name" value="THF_DHG_CYH"/>
    <property type="match status" value="1"/>
</dbReference>
<dbReference type="Pfam" id="PF02882">
    <property type="entry name" value="THF_DHG_CYH_C"/>
    <property type="match status" value="1"/>
</dbReference>
<dbReference type="PRINTS" id="PR00085">
    <property type="entry name" value="THFDHDRGNASE"/>
</dbReference>
<dbReference type="SUPFAM" id="SSF53223">
    <property type="entry name" value="Aminoacid dehydrogenase-like, N-terminal domain"/>
    <property type="match status" value="1"/>
</dbReference>
<dbReference type="SUPFAM" id="SSF51735">
    <property type="entry name" value="NAD(P)-binding Rossmann-fold domains"/>
    <property type="match status" value="1"/>
</dbReference>
<dbReference type="PROSITE" id="PS00767">
    <property type="entry name" value="THF_DHG_CYH_2"/>
    <property type="match status" value="1"/>
</dbReference>
<accession>C1F683</accession>
<proteinExistence type="inferred from homology"/>
<evidence type="ECO:0000255" key="1">
    <source>
        <dbReference type="HAMAP-Rule" id="MF_01576"/>
    </source>
</evidence>
<keyword id="KW-0028">Amino-acid biosynthesis</keyword>
<keyword id="KW-0368">Histidine biosynthesis</keyword>
<keyword id="KW-0378">Hydrolase</keyword>
<keyword id="KW-0486">Methionine biosynthesis</keyword>
<keyword id="KW-0511">Multifunctional enzyme</keyword>
<keyword id="KW-0521">NADP</keyword>
<keyword id="KW-0554">One-carbon metabolism</keyword>
<keyword id="KW-0560">Oxidoreductase</keyword>
<keyword id="KW-0658">Purine biosynthesis</keyword>
<keyword id="KW-1185">Reference proteome</keyword>
<protein>
    <recommendedName>
        <fullName evidence="1">Bifunctional protein FolD</fullName>
    </recommendedName>
    <domain>
        <recommendedName>
            <fullName evidence="1">Methylenetetrahydrofolate dehydrogenase</fullName>
            <ecNumber evidence="1">1.5.1.5</ecNumber>
        </recommendedName>
    </domain>
    <domain>
        <recommendedName>
            <fullName evidence="1">Methenyltetrahydrofolate cyclohydrolase</fullName>
            <ecNumber evidence="1">3.5.4.9</ecNumber>
        </recommendedName>
    </domain>
</protein>
<feature type="chain" id="PRO_1000185591" description="Bifunctional protein FolD">
    <location>
        <begin position="1"/>
        <end position="282"/>
    </location>
</feature>
<feature type="binding site" evidence="1">
    <location>
        <begin position="167"/>
        <end position="169"/>
    </location>
    <ligand>
        <name>NADP(+)</name>
        <dbReference type="ChEBI" id="CHEBI:58349"/>
    </ligand>
</feature>
<feature type="binding site" evidence="1">
    <location>
        <position position="192"/>
    </location>
    <ligand>
        <name>NADP(+)</name>
        <dbReference type="ChEBI" id="CHEBI:58349"/>
    </ligand>
</feature>
<reference key="1">
    <citation type="journal article" date="2009" name="Appl. Environ. Microbiol.">
        <title>Three genomes from the phylum Acidobacteria provide insight into the lifestyles of these microorganisms in soils.</title>
        <authorList>
            <person name="Ward N.L."/>
            <person name="Challacombe J.F."/>
            <person name="Janssen P.H."/>
            <person name="Henrissat B."/>
            <person name="Coutinho P.M."/>
            <person name="Wu M."/>
            <person name="Xie G."/>
            <person name="Haft D.H."/>
            <person name="Sait M."/>
            <person name="Badger J."/>
            <person name="Barabote R.D."/>
            <person name="Bradley B."/>
            <person name="Brettin T.S."/>
            <person name="Brinkac L.M."/>
            <person name="Bruce D."/>
            <person name="Creasy T."/>
            <person name="Daugherty S.C."/>
            <person name="Davidsen T.M."/>
            <person name="DeBoy R.T."/>
            <person name="Detter J.C."/>
            <person name="Dodson R.J."/>
            <person name="Durkin A.S."/>
            <person name="Ganapathy A."/>
            <person name="Gwinn-Giglio M."/>
            <person name="Han C.S."/>
            <person name="Khouri H."/>
            <person name="Kiss H."/>
            <person name="Kothari S.P."/>
            <person name="Madupu R."/>
            <person name="Nelson K.E."/>
            <person name="Nelson W.C."/>
            <person name="Paulsen I."/>
            <person name="Penn K."/>
            <person name="Ren Q."/>
            <person name="Rosovitz M.J."/>
            <person name="Selengut J.D."/>
            <person name="Shrivastava S."/>
            <person name="Sullivan S.A."/>
            <person name="Tapia R."/>
            <person name="Thompson L.S."/>
            <person name="Watkins K.L."/>
            <person name="Yang Q."/>
            <person name="Yu C."/>
            <person name="Zafar N."/>
            <person name="Zhou L."/>
            <person name="Kuske C.R."/>
        </authorList>
    </citation>
    <scope>NUCLEOTIDE SEQUENCE [LARGE SCALE GENOMIC DNA]</scope>
    <source>
        <strain>ATCC 51196 / DSM 11244 / BCRC 80197 / JCM 7670 / NBRC 15755 / NCIMB 13165 / 161</strain>
    </source>
</reference>
<organism>
    <name type="scientific">Acidobacterium capsulatum (strain ATCC 51196 / DSM 11244 / BCRC 80197 / JCM 7670 / NBRC 15755 / NCIMB 13165 / 161)</name>
    <dbReference type="NCBI Taxonomy" id="240015"/>
    <lineage>
        <taxon>Bacteria</taxon>
        <taxon>Pseudomonadati</taxon>
        <taxon>Acidobacteriota</taxon>
        <taxon>Terriglobia</taxon>
        <taxon>Terriglobales</taxon>
        <taxon>Acidobacteriaceae</taxon>
        <taxon>Acidobacterium</taxon>
    </lineage>
</organism>